<comment type="function">
    <text evidence="3 4">Involved in muropeptide degradation. Catalyzes the hydrolysis of the gamma-D-glutamyl-diaminopimelic acid (gamma-D-Glu-Dap) amide bond in the murein tripeptide L-alanyl-gamma-D-glutamyl-meso-diaminopimelic acid, leading to the formation of L-Ala-gamma-D-Glu and Dap (PubMed:12511517, PubMed:22970852). Has weak activity with L-Ala-gamma-D-Glu-L-Lys, MurNAc-tripeptide and gamma-D-Glu-meso-Dap (PubMed:22970852). Cannot hydrolyze murein tetrapeptide (PubMed:22970852).</text>
</comment>
<comment type="catalytic activity">
    <reaction evidence="1 3 4">
        <text>L-alanyl-gamma-D-glutamyl-meso-2,6-diaminopimelate + H2O = L-alanyl-D-glutamate + meso-2,6-diaminopimelate</text>
        <dbReference type="Rhea" id="RHEA:28398"/>
        <dbReference type="ChEBI" id="CHEBI:15377"/>
        <dbReference type="ChEBI" id="CHEBI:57791"/>
        <dbReference type="ChEBI" id="CHEBI:61395"/>
        <dbReference type="ChEBI" id="CHEBI:61401"/>
    </reaction>
</comment>
<comment type="cofactor">
    <cofactor evidence="1 4">
        <name>Zn(2+)</name>
        <dbReference type="ChEBI" id="CHEBI:29105"/>
    </cofactor>
    <text evidence="1 4">Binds 1 zinc ion per subunit.</text>
</comment>
<comment type="activity regulation">
    <text evidence="4">Inhibited by EDTA.</text>
</comment>
<comment type="biophysicochemical properties">
    <kinetics>
        <KM evidence="4">0.41 mM for L-alanyl-gamma-D-glutamyl-meso-diaminopimelic acid</KM>
        <text evidence="4">kcat is 38.3 sec(-1).</text>
    </kinetics>
    <phDependence>
        <text evidence="4">Optimum pH is 8.0.</text>
    </phDependence>
</comment>
<comment type="pathway">
    <text evidence="1 9">Cell wall degradation; peptidoglycan degradation.</text>
</comment>
<comment type="subunit">
    <text evidence="1 4">Homodimer.</text>
</comment>
<comment type="subcellular location">
    <subcellularLocation>
        <location evidence="1 8">Cytoplasm</location>
    </subcellularLocation>
</comment>
<comment type="similarity">
    <text evidence="1 7">Belongs to the peptidase M14 family.</text>
</comment>
<comment type="sequence caution" evidence="7">
    <conflict type="erroneous initiation">
        <sequence resource="EMBL-CDS" id="BAA14908"/>
    </conflict>
</comment>
<evidence type="ECO:0000255" key="1">
    <source>
        <dbReference type="HAMAP-Rule" id="MF_02211"/>
    </source>
</evidence>
<evidence type="ECO:0000255" key="2">
    <source>
        <dbReference type="PROSITE-ProRule" id="PRU01379"/>
    </source>
</evidence>
<evidence type="ECO:0000269" key="3">
    <source>
    </source>
</evidence>
<evidence type="ECO:0000269" key="4">
    <source>
    </source>
</evidence>
<evidence type="ECO:0000303" key="5">
    <source>
    </source>
</evidence>
<evidence type="ECO:0000303" key="6">
    <source>
    </source>
</evidence>
<evidence type="ECO:0000305" key="7"/>
<evidence type="ECO:0000305" key="8">
    <source>
    </source>
</evidence>
<evidence type="ECO:0000305" key="9">
    <source>
    </source>
</evidence>
<sequence length="242" mass="26558">MTVTRPRAERGAFPPGTEHYGRSLLGAPLIWFPAPAASRESGLILAGTHGDENSSVVTLSCALRTLTPSLRRHHVVLCVNPDGCQLGLRANANGVDLNRNFPAANWKEGETVYRWNSAAEERDVVLLTGDKPGSEPETQALCQLIHRIQPAWVVSFHDPLACIEDPRHSELGEWLAQAFELPLVTSVGYETPGSFGSWCADLNLHCITAEFPPISSDEASEKYLFAMANLLRWHPKDAIRPS</sequence>
<gene>
    <name evidence="1 5" type="primary">mpaA</name>
    <name type="synonym">ycjI</name>
    <name type="ordered locus">b1326</name>
    <name type="ordered locus">JW1319</name>
</gene>
<keyword id="KW-0121">Carboxypeptidase</keyword>
<keyword id="KW-0961">Cell wall biogenesis/degradation</keyword>
<keyword id="KW-0963">Cytoplasm</keyword>
<keyword id="KW-0378">Hydrolase</keyword>
<keyword id="KW-0479">Metal-binding</keyword>
<keyword id="KW-0482">Metalloprotease</keyword>
<keyword id="KW-0645">Protease</keyword>
<keyword id="KW-1185">Reference proteome</keyword>
<keyword id="KW-0862">Zinc</keyword>
<organism>
    <name type="scientific">Escherichia coli (strain K12)</name>
    <dbReference type="NCBI Taxonomy" id="83333"/>
    <lineage>
        <taxon>Bacteria</taxon>
        <taxon>Pseudomonadati</taxon>
        <taxon>Pseudomonadota</taxon>
        <taxon>Gammaproteobacteria</taxon>
        <taxon>Enterobacterales</taxon>
        <taxon>Enterobacteriaceae</taxon>
        <taxon>Escherichia</taxon>
    </lineage>
</organism>
<proteinExistence type="evidence at protein level"/>
<feature type="chain" id="PRO_0000168894" description="Murein peptide amidase A">
    <location>
        <begin position="1"/>
        <end position="242"/>
    </location>
</feature>
<feature type="domain" description="Peptidase M14" evidence="2">
    <location>
        <begin position="1"/>
        <end position="234"/>
    </location>
</feature>
<feature type="active site" description="Proton donor/acceptor" evidence="2">
    <location>
        <position position="210"/>
    </location>
</feature>
<feature type="binding site" evidence="2">
    <location>
        <position position="49"/>
    </location>
    <ligand>
        <name>Zn(2+)</name>
        <dbReference type="ChEBI" id="CHEBI:29105"/>
        <note>catalytic</note>
    </ligand>
</feature>
<feature type="binding site" evidence="2">
    <location>
        <position position="52"/>
    </location>
    <ligand>
        <name>Zn(2+)</name>
        <dbReference type="ChEBI" id="CHEBI:29105"/>
        <note>catalytic</note>
    </ligand>
</feature>
<feature type="binding site" evidence="2">
    <location>
        <position position="157"/>
    </location>
    <ligand>
        <name>Zn(2+)</name>
        <dbReference type="ChEBI" id="CHEBI:29105"/>
        <note>catalytic</note>
    </ligand>
</feature>
<protein>
    <recommendedName>
        <fullName evidence="1 5">Murein peptide amidase A</fullName>
        <ecNumber evidence="1 3 4">3.4.17.-</ecNumber>
    </recommendedName>
    <alternativeName>
        <fullName evidence="1 5">Gamma-D-Glu-Dap amidase</fullName>
    </alternativeName>
    <alternativeName>
        <fullName evidence="1 6">Zinc metallocarboxypeptidase MpaA</fullName>
    </alternativeName>
</protein>
<dbReference type="EC" id="3.4.17.-" evidence="1 3 4"/>
<dbReference type="EMBL" id="U00096">
    <property type="protein sequence ID" value="AAC74408.2"/>
    <property type="molecule type" value="Genomic_DNA"/>
</dbReference>
<dbReference type="EMBL" id="AP009048">
    <property type="protein sequence ID" value="BAA14908.1"/>
    <property type="status" value="ALT_INIT"/>
    <property type="molecule type" value="Genomic_DNA"/>
</dbReference>
<dbReference type="EMBL" id="U33213">
    <property type="status" value="NOT_ANNOTATED_CDS"/>
    <property type="molecule type" value="Genomic_DNA"/>
</dbReference>
<dbReference type="PIR" id="A64882">
    <property type="entry name" value="A64882"/>
</dbReference>
<dbReference type="RefSeq" id="NP_415842.2">
    <property type="nucleotide sequence ID" value="NC_000913.3"/>
</dbReference>
<dbReference type="RefSeq" id="WP_000219122.1">
    <property type="nucleotide sequence ID" value="NZ_LN832404.1"/>
</dbReference>
<dbReference type="SMR" id="P0ACV6"/>
<dbReference type="BioGRID" id="4260153">
    <property type="interactions" value="292"/>
</dbReference>
<dbReference type="FunCoup" id="P0ACV6">
    <property type="interactions" value="9"/>
</dbReference>
<dbReference type="IntAct" id="P0ACV6">
    <property type="interactions" value="4"/>
</dbReference>
<dbReference type="STRING" id="511145.b1326"/>
<dbReference type="MEROPS" id="M14.034"/>
<dbReference type="jPOST" id="P0ACV6"/>
<dbReference type="PaxDb" id="511145-b1326"/>
<dbReference type="EnsemblBacteria" id="AAC74408">
    <property type="protein sequence ID" value="AAC74408"/>
    <property type="gene ID" value="b1326"/>
</dbReference>
<dbReference type="GeneID" id="93775454"/>
<dbReference type="GeneID" id="945969"/>
<dbReference type="KEGG" id="ecj:JW1319"/>
<dbReference type="KEGG" id="eco:b1326"/>
<dbReference type="KEGG" id="ecoc:C3026_07760"/>
<dbReference type="PATRIC" id="fig|1411691.4.peg.952"/>
<dbReference type="EchoBASE" id="EB3665"/>
<dbReference type="eggNOG" id="COG2866">
    <property type="taxonomic scope" value="Bacteria"/>
</dbReference>
<dbReference type="HOGENOM" id="CLU_102905_0_0_6"/>
<dbReference type="InParanoid" id="P0ACV6"/>
<dbReference type="OrthoDB" id="9779324at2"/>
<dbReference type="PhylomeDB" id="P0ACV6"/>
<dbReference type="BioCyc" id="EcoCyc:G6662-MONOMER"/>
<dbReference type="BioCyc" id="MetaCyc:G6662-MONOMER"/>
<dbReference type="UniPathway" id="UPA00549"/>
<dbReference type="PRO" id="PR:P0ACV6"/>
<dbReference type="Proteomes" id="UP000000625">
    <property type="component" value="Chromosome"/>
</dbReference>
<dbReference type="GO" id="GO:0005737">
    <property type="term" value="C:cytoplasm"/>
    <property type="evidence" value="ECO:0007669"/>
    <property type="project" value="UniProtKB-SubCell"/>
</dbReference>
<dbReference type="GO" id="GO:0004040">
    <property type="term" value="F:amidase activity"/>
    <property type="evidence" value="ECO:0000316"/>
    <property type="project" value="EcoliWiki"/>
</dbReference>
<dbReference type="GO" id="GO:0061473">
    <property type="term" value="F:murein tripeptide carboxypeptidase activity"/>
    <property type="evidence" value="ECO:0000314"/>
    <property type="project" value="EcoCyc"/>
</dbReference>
<dbReference type="GO" id="GO:0042803">
    <property type="term" value="F:protein homodimerization activity"/>
    <property type="evidence" value="ECO:0000314"/>
    <property type="project" value="EcoCyc"/>
</dbReference>
<dbReference type="GO" id="GO:0008270">
    <property type="term" value="F:zinc ion binding"/>
    <property type="evidence" value="ECO:0000314"/>
    <property type="project" value="EcoCyc"/>
</dbReference>
<dbReference type="GO" id="GO:0016998">
    <property type="term" value="P:cell wall macromolecule catabolic process"/>
    <property type="evidence" value="ECO:0007669"/>
    <property type="project" value="UniProtKB-UniPathway"/>
</dbReference>
<dbReference type="GO" id="GO:0071555">
    <property type="term" value="P:cell wall organization"/>
    <property type="evidence" value="ECO:0007669"/>
    <property type="project" value="UniProtKB-KW"/>
</dbReference>
<dbReference type="GO" id="GO:0009050">
    <property type="term" value="P:glycopeptide catabolic process"/>
    <property type="evidence" value="ECO:0000315"/>
    <property type="project" value="EcoCyc"/>
</dbReference>
<dbReference type="GO" id="GO:0009253">
    <property type="term" value="P:peptidoglycan catabolic process"/>
    <property type="evidence" value="ECO:0000315"/>
    <property type="project" value="EcoCyc"/>
</dbReference>
<dbReference type="GO" id="GO:0006508">
    <property type="term" value="P:proteolysis"/>
    <property type="evidence" value="ECO:0007669"/>
    <property type="project" value="UniProtKB-KW"/>
</dbReference>
<dbReference type="CDD" id="cd06904">
    <property type="entry name" value="M14_MpaA-like"/>
    <property type="match status" value="1"/>
</dbReference>
<dbReference type="FunFam" id="3.40.630.10:FF:000032">
    <property type="entry name" value="Murein peptide amidase A"/>
    <property type="match status" value="1"/>
</dbReference>
<dbReference type="Gene3D" id="3.40.630.10">
    <property type="entry name" value="Zn peptidases"/>
    <property type="match status" value="1"/>
</dbReference>
<dbReference type="HAMAP" id="MF_02211">
    <property type="entry name" value="MpaA_carboxypeptidase"/>
    <property type="match status" value="1"/>
</dbReference>
<dbReference type="InterPro" id="IPR043691">
    <property type="entry name" value="MpaA"/>
</dbReference>
<dbReference type="InterPro" id="IPR000834">
    <property type="entry name" value="Peptidase_M14"/>
</dbReference>
<dbReference type="NCBIfam" id="NF007897">
    <property type="entry name" value="PRK10602.1"/>
    <property type="match status" value="1"/>
</dbReference>
<dbReference type="Pfam" id="PF00246">
    <property type="entry name" value="Peptidase_M14"/>
    <property type="match status" value="1"/>
</dbReference>
<dbReference type="SUPFAM" id="SSF53187">
    <property type="entry name" value="Zn-dependent exopeptidases"/>
    <property type="match status" value="1"/>
</dbReference>
<dbReference type="PROSITE" id="PS52035">
    <property type="entry name" value="PEPTIDASE_M14"/>
    <property type="match status" value="1"/>
</dbReference>
<name>MPAA_ECOLI</name>
<reference key="1">
    <citation type="journal article" date="1996" name="DNA Res.">
        <title>A 570-kb DNA sequence of the Escherichia coli K-12 genome corresponding to the 28.0-40.1 min region on the linkage map.</title>
        <authorList>
            <person name="Aiba H."/>
            <person name="Baba T."/>
            <person name="Fujita K."/>
            <person name="Hayashi K."/>
            <person name="Inada T."/>
            <person name="Isono K."/>
            <person name="Itoh T."/>
            <person name="Kasai H."/>
            <person name="Kashimoto K."/>
            <person name="Kimura S."/>
            <person name="Kitakawa M."/>
            <person name="Kitagawa M."/>
            <person name="Makino K."/>
            <person name="Miki T."/>
            <person name="Mizobuchi K."/>
            <person name="Mori H."/>
            <person name="Mori T."/>
            <person name="Motomura K."/>
            <person name="Nakade S."/>
            <person name="Nakamura Y."/>
            <person name="Nashimoto H."/>
            <person name="Nishio Y."/>
            <person name="Oshima T."/>
            <person name="Saito N."/>
            <person name="Sampei G."/>
            <person name="Seki Y."/>
            <person name="Sivasundaram S."/>
            <person name="Tagami H."/>
            <person name="Takeda J."/>
            <person name="Takemoto K."/>
            <person name="Takeuchi Y."/>
            <person name="Wada C."/>
            <person name="Yamamoto Y."/>
            <person name="Horiuchi T."/>
        </authorList>
    </citation>
    <scope>NUCLEOTIDE SEQUENCE [LARGE SCALE GENOMIC DNA]</scope>
    <source>
        <strain>K12 / W3110 / ATCC 27325 / DSM 5911</strain>
    </source>
</reference>
<reference key="2">
    <citation type="journal article" date="1997" name="Science">
        <title>The complete genome sequence of Escherichia coli K-12.</title>
        <authorList>
            <person name="Blattner F.R."/>
            <person name="Plunkett G. III"/>
            <person name="Bloch C.A."/>
            <person name="Perna N.T."/>
            <person name="Burland V."/>
            <person name="Riley M."/>
            <person name="Collado-Vides J."/>
            <person name="Glasner J.D."/>
            <person name="Rode C.K."/>
            <person name="Mayhew G.F."/>
            <person name="Gregor J."/>
            <person name="Davis N.W."/>
            <person name="Kirkpatrick H.A."/>
            <person name="Goeden M.A."/>
            <person name="Rose D.J."/>
            <person name="Mau B."/>
            <person name="Shao Y."/>
        </authorList>
    </citation>
    <scope>NUCLEOTIDE SEQUENCE [LARGE SCALE GENOMIC DNA]</scope>
    <source>
        <strain>K12 / MG1655 / ATCC 47076</strain>
    </source>
</reference>
<reference key="3">
    <citation type="journal article" date="2006" name="Mol. Syst. Biol.">
        <title>Highly accurate genome sequences of Escherichia coli K-12 strains MG1655 and W3110.</title>
        <authorList>
            <person name="Hayashi K."/>
            <person name="Morooka N."/>
            <person name="Yamamoto Y."/>
            <person name="Fujita K."/>
            <person name="Isono K."/>
            <person name="Choi S."/>
            <person name="Ohtsubo E."/>
            <person name="Baba T."/>
            <person name="Wanner B.L."/>
            <person name="Mori H."/>
            <person name="Horiuchi T."/>
        </authorList>
    </citation>
    <scope>NUCLEOTIDE SEQUENCE [LARGE SCALE GENOMIC DNA]</scope>
    <source>
        <strain>K12 / W3110 / ATCC 27325 / DSM 5911</strain>
    </source>
</reference>
<reference key="4">
    <citation type="journal article" date="1995" name="J. Biol. Chem.">
        <title>Thioredoxin-linked 'thiol peroxidase' from periplasmic space of Escherichia coli.</title>
        <authorList>
            <person name="Cha M.-K."/>
            <person name="Kim H.-K."/>
            <person name="Kim I.-H."/>
        </authorList>
    </citation>
    <scope>NUCLEOTIDE SEQUENCE [GENOMIC DNA] OF 201-242</scope>
    <source>
        <strain>K12</strain>
    </source>
</reference>
<reference key="5">
    <citation type="unpublished observations" date="1996-03">
        <authorList>
            <person name="Rudd K.E."/>
        </authorList>
    </citation>
    <scope>IDENTIFICATION</scope>
</reference>
<reference key="6">
    <citation type="journal article" date="2003" name="J. Bacteriol.">
        <title>Identification of MpaA, an amidase in Escherichia coli that hydrolyzes the gamma-D-glutamyl-meso-diaminopimelate bond in murein peptides.</title>
        <authorList>
            <person name="Uehara T."/>
            <person name="Park J.T."/>
        </authorList>
    </citation>
    <scope>FUNCTION</scope>
    <scope>CATALYTIC ACTIVITY</scope>
    <scope>SUBCELLULAR LOCATION</scope>
</reference>
<reference key="7">
    <citation type="journal article" date="2012" name="Biochem. J.">
        <title>MpaA is a murein-tripeptide-specific zinc carboxypeptidase that functions as part of a catabolic pathway for peptidoglycan-derived peptides in gamma-proteobacteria.</title>
        <authorList>
            <person name="Maqbool A."/>
            <person name="Herve M."/>
            <person name="Mengin-Lecreulx D."/>
            <person name="Wilkinson A.J."/>
            <person name="Thomas G.H."/>
        </authorList>
    </citation>
    <scope>FUNCTION</scope>
    <scope>CATALYTIC ACTIVITY</scope>
    <scope>COFACTOR</scope>
    <scope>ACTIVITY REGULATION</scope>
    <scope>BIOPHYSICOCHEMICAL PROPERTIES</scope>
    <scope>PATHWAY</scope>
    <scope>SUBUNIT</scope>
    <source>
        <strain>K12 / MG1655 / ATCC 47076</strain>
    </source>
</reference>
<accession>P0ACV6</accession>
<accession>P51983</accession>
<accession>P77675</accession>